<keyword id="KW-0175">Coiled coil</keyword>
<keyword id="KW-0963">Cytoplasm</keyword>
<keyword id="KW-0967">Endosome</keyword>
<keyword id="KW-1017">Isopeptide bond</keyword>
<keyword id="KW-0449">Lipoprotein</keyword>
<keyword id="KW-0472">Membrane</keyword>
<keyword id="KW-0519">Myristate</keyword>
<keyword id="KW-0597">Phosphoprotein</keyword>
<keyword id="KW-0653">Protein transport</keyword>
<keyword id="KW-1185">Reference proteome</keyword>
<keyword id="KW-0813">Transport</keyword>
<keyword id="KW-0832">Ubl conjugation</keyword>
<accession>Q58CS7</accession>
<accession>Q29RQ4</accession>
<feature type="initiator methionine" description="Removed" evidence="3">
    <location>
        <position position="1"/>
    </location>
</feature>
<feature type="chain" id="PRO_0000211478" description="Charged multivesicular body protein 3">
    <location>
        <begin position="2"/>
        <end position="222"/>
    </location>
</feature>
<feature type="region of interest" description="Intramolecular interaction with C-terminus" evidence="1">
    <location>
        <begin position="2"/>
        <end position="113"/>
    </location>
</feature>
<feature type="region of interest" description="Important for autoinhibitory function" evidence="1">
    <location>
        <begin position="59"/>
        <end position="64"/>
    </location>
</feature>
<feature type="region of interest" description="Interaction with VPS4A" evidence="1">
    <location>
        <begin position="151"/>
        <end position="222"/>
    </location>
</feature>
<feature type="region of interest" description="Intramolecular interaction with N-terminus" evidence="1">
    <location>
        <begin position="151"/>
        <end position="220"/>
    </location>
</feature>
<feature type="region of interest" description="Important for autoinhibitory function" evidence="1">
    <location>
        <begin position="168"/>
        <end position="169"/>
    </location>
</feature>
<feature type="region of interest" description="Disordered" evidence="4">
    <location>
        <begin position="180"/>
        <end position="222"/>
    </location>
</feature>
<feature type="region of interest" description="Interaction with STAMBP" evidence="1">
    <location>
        <begin position="196"/>
        <end position="222"/>
    </location>
</feature>
<feature type="region of interest" description="Interaction with STAMBP" evidence="1">
    <location>
        <begin position="203"/>
        <end position="207"/>
    </location>
</feature>
<feature type="region of interest" description="Interaction with STAMBP" evidence="1">
    <location>
        <begin position="221"/>
        <end position="222"/>
    </location>
</feature>
<feature type="coiled-coil region" evidence="3">
    <location>
        <begin position="22"/>
        <end position="54"/>
    </location>
</feature>
<feature type="coiled-coil region" evidence="3">
    <location>
        <begin position="149"/>
        <end position="222"/>
    </location>
</feature>
<feature type="short sequence motif" description="MIT-interacting motif" evidence="1">
    <location>
        <begin position="201"/>
        <end position="211"/>
    </location>
</feature>
<feature type="compositionally biased region" description="Acidic residues" evidence="4">
    <location>
        <begin position="200"/>
        <end position="210"/>
    </location>
</feature>
<feature type="site" description="Important for autoinhibitory function" evidence="1">
    <location>
        <position position="48"/>
    </location>
</feature>
<feature type="site" description="Interaction with STAMBP" evidence="1">
    <location>
        <position position="216"/>
    </location>
</feature>
<feature type="modified residue" description="Phosphoserine" evidence="2">
    <location>
        <position position="200"/>
    </location>
</feature>
<feature type="lipid moiety-binding region" description="N-myristoyl glycine" evidence="3">
    <location>
        <position position="2"/>
    </location>
</feature>
<feature type="cross-link" description="Glycyl lysine isopeptide (Lys-Gly) (interchain with G-Cter in ubiquitin)" evidence="2">
    <location>
        <position position="179"/>
    </location>
</feature>
<gene>
    <name type="primary">CHMP3</name>
    <name type="synonym">VPS24</name>
</gene>
<organism>
    <name type="scientific">Bos taurus</name>
    <name type="common">Bovine</name>
    <dbReference type="NCBI Taxonomy" id="9913"/>
    <lineage>
        <taxon>Eukaryota</taxon>
        <taxon>Metazoa</taxon>
        <taxon>Chordata</taxon>
        <taxon>Craniata</taxon>
        <taxon>Vertebrata</taxon>
        <taxon>Euteleostomi</taxon>
        <taxon>Mammalia</taxon>
        <taxon>Eutheria</taxon>
        <taxon>Laurasiatheria</taxon>
        <taxon>Artiodactyla</taxon>
        <taxon>Ruminantia</taxon>
        <taxon>Pecora</taxon>
        <taxon>Bovidae</taxon>
        <taxon>Bovinae</taxon>
        <taxon>Bos</taxon>
    </lineage>
</organism>
<sequence>MGLFGKTQEKPPKELVNEWSLKIRKEMRVVDRQIRDIQREEEKVKRSVKDAAKKGQKDVCVVLAKEMIRSRKAVSKLYASKAHMNSVLMGMKNQLAVLRVAGSLQKSTEVMKAMQSLVKIPEIQATMRELSKEMMKAGIIEEMLEDTFESMDDQEEMEEAAEMEIDRILFEITAGALGKAPSKVTDALPEPEPLGAMAASEDEEEEEEALEAMQSRLATLRS</sequence>
<reference key="1">
    <citation type="journal article" date="2005" name="BMC Genomics">
        <title>Characterization of 954 bovine full-CDS cDNA sequences.</title>
        <authorList>
            <person name="Harhay G.P."/>
            <person name="Sonstegard T.S."/>
            <person name="Keele J.W."/>
            <person name="Heaton M.P."/>
            <person name="Clawson M.L."/>
            <person name="Snelling W.M."/>
            <person name="Wiedmann R.T."/>
            <person name="Van Tassell C.P."/>
            <person name="Smith T.P.L."/>
        </authorList>
    </citation>
    <scope>NUCLEOTIDE SEQUENCE [LARGE SCALE MRNA]</scope>
</reference>
<reference key="2">
    <citation type="submission" date="2006-02" db="EMBL/GenBank/DDBJ databases">
        <authorList>
            <consortium name="NIH - Mammalian Gene Collection (MGC) project"/>
        </authorList>
    </citation>
    <scope>NUCLEOTIDE SEQUENCE [LARGE SCALE MRNA]</scope>
    <source>
        <strain>Hereford</strain>
        <tissue>Hypothalamus</tissue>
    </source>
</reference>
<protein>
    <recommendedName>
        <fullName>Charged multivesicular body protein 3</fullName>
    </recommendedName>
    <alternativeName>
        <fullName>Chromatin-modifying protein 3</fullName>
    </alternativeName>
    <alternativeName>
        <fullName>Vacuolar protein sorting-associated protein 24</fullName>
    </alternativeName>
</protein>
<dbReference type="EMBL" id="BT021870">
    <property type="protein sequence ID" value="AAX46717.1"/>
    <property type="molecule type" value="mRNA"/>
</dbReference>
<dbReference type="EMBL" id="BC114072">
    <property type="protein sequence ID" value="AAI14073.1"/>
    <property type="molecule type" value="mRNA"/>
</dbReference>
<dbReference type="RefSeq" id="NP_001030223.2">
    <property type="nucleotide sequence ID" value="NM_001035051.3"/>
</dbReference>
<dbReference type="SMR" id="Q58CS7"/>
<dbReference type="FunCoup" id="Q58CS7">
    <property type="interactions" value="3433"/>
</dbReference>
<dbReference type="STRING" id="9913.ENSBTAP00000068505"/>
<dbReference type="PaxDb" id="9913-ENSBTAP00000018071"/>
<dbReference type="Ensembl" id="ENSBTAT00000018071.6">
    <property type="protein sequence ID" value="ENSBTAP00000018071.5"/>
    <property type="gene ID" value="ENSBTAG00000013589.7"/>
</dbReference>
<dbReference type="GeneID" id="507722"/>
<dbReference type="KEGG" id="bta:507722"/>
<dbReference type="CTD" id="51652"/>
<dbReference type="VEuPathDB" id="HostDB:ENSBTAG00000013589"/>
<dbReference type="eggNOG" id="KOG3229">
    <property type="taxonomic scope" value="Eukaryota"/>
</dbReference>
<dbReference type="GeneTree" id="ENSGT00950000182832"/>
<dbReference type="HOGENOM" id="CLU_069208_0_1_1"/>
<dbReference type="InParanoid" id="Q58CS7"/>
<dbReference type="OMA" id="KILWEVT"/>
<dbReference type="OrthoDB" id="2329734at2759"/>
<dbReference type="TreeFam" id="TF105848"/>
<dbReference type="Reactome" id="R-BTA-1632852">
    <property type="pathway name" value="Macroautophagy"/>
</dbReference>
<dbReference type="Reactome" id="R-BTA-5620971">
    <property type="pathway name" value="Pyroptosis"/>
</dbReference>
<dbReference type="Reactome" id="R-BTA-917729">
    <property type="pathway name" value="Endosomal Sorting Complex Required For Transport (ESCRT)"/>
</dbReference>
<dbReference type="Reactome" id="R-BTA-9668328">
    <property type="pathway name" value="Sealing of the nuclear envelope (NE) by ESCRT-III"/>
</dbReference>
<dbReference type="Proteomes" id="UP000009136">
    <property type="component" value="Chromosome 11"/>
</dbReference>
<dbReference type="Bgee" id="ENSBTAG00000013589">
    <property type="expression patterns" value="Expressed in adenohypophysis and 107 other cell types or tissues"/>
</dbReference>
<dbReference type="GO" id="GO:1904930">
    <property type="term" value="C:amphisome membrane"/>
    <property type="evidence" value="ECO:0007669"/>
    <property type="project" value="Ensembl"/>
</dbReference>
<dbReference type="GO" id="GO:0005829">
    <property type="term" value="C:cytosol"/>
    <property type="evidence" value="ECO:0007669"/>
    <property type="project" value="UniProtKB-SubCell"/>
</dbReference>
<dbReference type="GO" id="GO:0000815">
    <property type="term" value="C:ESCRT III complex"/>
    <property type="evidence" value="ECO:0000318"/>
    <property type="project" value="GO_Central"/>
</dbReference>
<dbReference type="GO" id="GO:0000776">
    <property type="term" value="C:kinetochore"/>
    <property type="evidence" value="ECO:0007669"/>
    <property type="project" value="Ensembl"/>
</dbReference>
<dbReference type="GO" id="GO:0005828">
    <property type="term" value="C:kinetochore microtubule"/>
    <property type="evidence" value="ECO:0007669"/>
    <property type="project" value="Ensembl"/>
</dbReference>
<dbReference type="GO" id="GO:0005765">
    <property type="term" value="C:lysosomal membrane"/>
    <property type="evidence" value="ECO:0007669"/>
    <property type="project" value="Ensembl"/>
</dbReference>
<dbReference type="GO" id="GO:0030496">
    <property type="term" value="C:midbody"/>
    <property type="evidence" value="ECO:0007669"/>
    <property type="project" value="Ensembl"/>
</dbReference>
<dbReference type="GO" id="GO:0005771">
    <property type="term" value="C:multivesicular body"/>
    <property type="evidence" value="ECO:0000318"/>
    <property type="project" value="GO_Central"/>
</dbReference>
<dbReference type="GO" id="GO:0032585">
    <property type="term" value="C:multivesicular body membrane"/>
    <property type="evidence" value="ECO:0007669"/>
    <property type="project" value="Ensembl"/>
</dbReference>
<dbReference type="GO" id="GO:0005643">
    <property type="term" value="C:nuclear pore"/>
    <property type="evidence" value="ECO:0007669"/>
    <property type="project" value="Ensembl"/>
</dbReference>
<dbReference type="GO" id="GO:0005886">
    <property type="term" value="C:plasma membrane"/>
    <property type="evidence" value="ECO:0007669"/>
    <property type="project" value="Ensembl"/>
</dbReference>
<dbReference type="GO" id="GO:0031210">
    <property type="term" value="F:phosphatidylcholine binding"/>
    <property type="evidence" value="ECO:0007669"/>
    <property type="project" value="Ensembl"/>
</dbReference>
<dbReference type="GO" id="GO:1990381">
    <property type="term" value="F:ubiquitin-specific protease binding"/>
    <property type="evidence" value="ECO:0007669"/>
    <property type="project" value="Ensembl"/>
</dbReference>
<dbReference type="GO" id="GO:0097352">
    <property type="term" value="P:autophagosome maturation"/>
    <property type="evidence" value="ECO:0007669"/>
    <property type="project" value="Ensembl"/>
</dbReference>
<dbReference type="GO" id="GO:0032509">
    <property type="term" value="P:endosome transport via multivesicular body sorting pathway"/>
    <property type="evidence" value="ECO:0000318"/>
    <property type="project" value="GO_Central"/>
</dbReference>
<dbReference type="GO" id="GO:1902774">
    <property type="term" value="P:late endosome to lysosome transport"/>
    <property type="evidence" value="ECO:0007669"/>
    <property type="project" value="Ensembl"/>
</dbReference>
<dbReference type="GO" id="GO:0045324">
    <property type="term" value="P:late endosome to vacuole transport"/>
    <property type="evidence" value="ECO:0000318"/>
    <property type="project" value="GO_Central"/>
</dbReference>
<dbReference type="GO" id="GO:0061952">
    <property type="term" value="P:midbody abscission"/>
    <property type="evidence" value="ECO:0007669"/>
    <property type="project" value="Ensembl"/>
</dbReference>
<dbReference type="GO" id="GO:0007080">
    <property type="term" value="P:mitotic metaphase chromosome alignment"/>
    <property type="evidence" value="ECO:0007669"/>
    <property type="project" value="Ensembl"/>
</dbReference>
<dbReference type="GO" id="GO:0061763">
    <property type="term" value="P:multivesicular body-lysosome fusion"/>
    <property type="evidence" value="ECO:0007669"/>
    <property type="project" value="Ensembl"/>
</dbReference>
<dbReference type="GO" id="GO:0031468">
    <property type="term" value="P:nuclear membrane reassembly"/>
    <property type="evidence" value="ECO:0007669"/>
    <property type="project" value="Ensembl"/>
</dbReference>
<dbReference type="GO" id="GO:0001778">
    <property type="term" value="P:plasma membrane repair"/>
    <property type="evidence" value="ECO:0007669"/>
    <property type="project" value="Ensembl"/>
</dbReference>
<dbReference type="GO" id="GO:0051258">
    <property type="term" value="P:protein polymerization"/>
    <property type="evidence" value="ECO:0007669"/>
    <property type="project" value="Ensembl"/>
</dbReference>
<dbReference type="GO" id="GO:0015031">
    <property type="term" value="P:protein transport"/>
    <property type="evidence" value="ECO:0000318"/>
    <property type="project" value="GO_Central"/>
</dbReference>
<dbReference type="GO" id="GO:0010824">
    <property type="term" value="P:regulation of centrosome duplication"/>
    <property type="evidence" value="ECO:0007669"/>
    <property type="project" value="Ensembl"/>
</dbReference>
<dbReference type="GO" id="GO:2000641">
    <property type="term" value="P:regulation of early endosome to late endosome transport"/>
    <property type="evidence" value="ECO:0007669"/>
    <property type="project" value="Ensembl"/>
</dbReference>
<dbReference type="GO" id="GO:1901673">
    <property type="term" value="P:regulation of mitotic spindle assembly"/>
    <property type="evidence" value="ECO:0007669"/>
    <property type="project" value="Ensembl"/>
</dbReference>
<dbReference type="GO" id="GO:0044790">
    <property type="term" value="P:suppression of viral release by host"/>
    <property type="evidence" value="ECO:0007669"/>
    <property type="project" value="Ensembl"/>
</dbReference>
<dbReference type="GO" id="GO:0043162">
    <property type="term" value="P:ubiquitin-dependent protein catabolic process via the multivesicular body sorting pathway"/>
    <property type="evidence" value="ECO:0007669"/>
    <property type="project" value="Ensembl"/>
</dbReference>
<dbReference type="GO" id="GO:0046761">
    <property type="term" value="P:viral budding from plasma membrane"/>
    <property type="evidence" value="ECO:0007669"/>
    <property type="project" value="Ensembl"/>
</dbReference>
<dbReference type="GO" id="GO:0039702">
    <property type="term" value="P:viral budding via host ESCRT complex"/>
    <property type="evidence" value="ECO:0007669"/>
    <property type="project" value="Ensembl"/>
</dbReference>
<dbReference type="Gene3D" id="6.10.140.1230">
    <property type="match status" value="1"/>
</dbReference>
<dbReference type="InterPro" id="IPR005024">
    <property type="entry name" value="Snf7_fam"/>
</dbReference>
<dbReference type="PANTHER" id="PTHR10476">
    <property type="entry name" value="CHARGED MULTIVESICULAR BODY PROTEIN"/>
    <property type="match status" value="1"/>
</dbReference>
<dbReference type="Pfam" id="PF03357">
    <property type="entry name" value="Snf7"/>
    <property type="match status" value="1"/>
</dbReference>
<proteinExistence type="evidence at transcript level"/>
<comment type="function">
    <text evidence="1">Probable core component of the endosomal sorting required for transport complex III (ESCRT-III) which is involved in multivesicular bodies (MVBs) formation and sorting of endosomal cargo proteins into MVBs. MVBs contain intraluminal vesicles (ILVs) that are generated by invagination and scission from the limiting membrane of the endosome and mostly are delivered to lysosomes enabling degradation of membrane proteins, such as stimulated growth factor receptors, lysosomal enzymes and lipids. The MVB pathway appears to require the sequential function of ESCRT-O, -I,-II and -III complexes. ESCRT-III proteins mostly dissociate from the invaginating membrane before the ILV is released. The ESCRT machinery also functions in topologically equivalent membrane fission events, such as the terminal stages of cytokinesis and the budding of enveloped viruses (lentiviruses). ESCRT-III proteins are believed to mediate the necessary vesicle extrusion and/or membrane fission activities, possibly in conjunction with the AAA ATPase VPS4. Selectively binds to phosphatidylinositol 3,5-bisphosphate PtdIns(3,5)P2 and PtdIns(3,4)P2 in preference to other phosphoinositides tested. Involved in late stages of cytokinesis. Plays a role in endosomal sorting/trafficking of EGF receptor (By similarity).</text>
</comment>
<comment type="subunit">
    <text evidence="1">Probable core component of the endosomal sorting required for transport complex III (ESCRT-III). ESCRT-III components are thought to multimerize to form a flat lattice on the perimeter membrane of the endosome. Several assembly forms of ESCRT-III may exist that interact and act sequentially. Forms a metastable monomer in solution; its core structure (without part of the putative autoinhibitory C-terminal acidic region) oligomerizes into a flat lattice via two different dimerization interfaces. In vitro, heteromerizes with CHMP2A (but not CHMP4) to form helical tubular structures that expose membrane-interacting sites on the outside whereas VPS4B can associate on the inside of the tubule. May interact with IGFBP7; the relevance of such interaction however remains unclear. Interacts with CHMP2A. Interacts with CHMP4A; the interaction requires the release of CHMP4A autoinhibition. Interacts with VPS4A. Interacts with STAMBP; the interaction appears to relieve the autoinhibition of CHMP3 (By similarity). Interacts with VTA1 (By similarity).</text>
</comment>
<comment type="subcellular location">
    <subcellularLocation>
        <location evidence="1">Cytoplasm</location>
        <location evidence="1">Cytosol</location>
    </subcellularLocation>
    <subcellularLocation>
        <location evidence="1">Membrane</location>
        <topology evidence="1">Lipid-anchor</topology>
    </subcellularLocation>
    <subcellularLocation>
        <location evidence="1">Endosome</location>
    </subcellularLocation>
    <subcellularLocation>
        <location evidence="1">Late endosome membrane</location>
    </subcellularLocation>
    <text evidence="1">Localizes to the midbody of dividing cells.</text>
</comment>
<comment type="domain">
    <text>The acidic C-terminus and the basic N-termminus are thought to render the protein in a closed, soluble and inactive conformation through an autoinhibitory intramolecular interaction. The open and active conformation, which enables membrane binding and oligomerization, is achieved by interaction with other cellular binding partners, probably including other ESCRT components.</text>
</comment>
<comment type="similarity">
    <text evidence="5">Belongs to the SNF7 family.</text>
</comment>
<evidence type="ECO:0000250" key="1"/>
<evidence type="ECO:0000250" key="2">
    <source>
        <dbReference type="UniProtKB" id="Q9Y3E7"/>
    </source>
</evidence>
<evidence type="ECO:0000255" key="3"/>
<evidence type="ECO:0000256" key="4">
    <source>
        <dbReference type="SAM" id="MobiDB-lite"/>
    </source>
</evidence>
<evidence type="ECO:0000305" key="5"/>
<name>CHMP3_BOVIN</name>